<organism>
    <name type="scientific">Brucella suis (strain ATCC 23445 / NCTC 10510)</name>
    <dbReference type="NCBI Taxonomy" id="470137"/>
    <lineage>
        <taxon>Bacteria</taxon>
        <taxon>Pseudomonadati</taxon>
        <taxon>Pseudomonadota</taxon>
        <taxon>Alphaproteobacteria</taxon>
        <taxon>Hyphomicrobiales</taxon>
        <taxon>Brucellaceae</taxon>
        <taxon>Brucella/Ochrobactrum group</taxon>
        <taxon>Brucella</taxon>
    </lineage>
</organism>
<proteinExistence type="inferred from homology"/>
<dbReference type="EC" id="4.3.2.3" evidence="1"/>
<dbReference type="EMBL" id="CP000911">
    <property type="protein sequence ID" value="ABY37620.1"/>
    <property type="molecule type" value="Genomic_DNA"/>
</dbReference>
<dbReference type="RefSeq" id="WP_004688080.1">
    <property type="nucleotide sequence ID" value="NC_010169.1"/>
</dbReference>
<dbReference type="SMR" id="B0CKJ0"/>
<dbReference type="KEGG" id="bmt:BSUIS_A0535"/>
<dbReference type="HOGENOM" id="CLU_070848_1_0_5"/>
<dbReference type="UniPathway" id="UPA00395"/>
<dbReference type="Proteomes" id="UP000008545">
    <property type="component" value="Chromosome I"/>
</dbReference>
<dbReference type="GO" id="GO:0004848">
    <property type="term" value="F:ureidoglycolate hydrolase activity"/>
    <property type="evidence" value="ECO:0007669"/>
    <property type="project" value="InterPro"/>
</dbReference>
<dbReference type="GO" id="GO:0050385">
    <property type="term" value="F:ureidoglycolate lyase activity"/>
    <property type="evidence" value="ECO:0007669"/>
    <property type="project" value="UniProtKB-UniRule"/>
</dbReference>
<dbReference type="GO" id="GO:0000256">
    <property type="term" value="P:allantoin catabolic process"/>
    <property type="evidence" value="ECO:0007669"/>
    <property type="project" value="UniProtKB-UniRule"/>
</dbReference>
<dbReference type="GO" id="GO:0006145">
    <property type="term" value="P:purine nucleobase catabolic process"/>
    <property type="evidence" value="ECO:0007669"/>
    <property type="project" value="UniProtKB-UniRule"/>
</dbReference>
<dbReference type="CDD" id="cd20298">
    <property type="entry name" value="cupin_UAH"/>
    <property type="match status" value="1"/>
</dbReference>
<dbReference type="Gene3D" id="2.60.120.480">
    <property type="entry name" value="Ureidoglycolate hydrolase"/>
    <property type="match status" value="1"/>
</dbReference>
<dbReference type="HAMAP" id="MF_00616">
    <property type="entry name" value="Ureidogly_lyase"/>
    <property type="match status" value="1"/>
</dbReference>
<dbReference type="InterPro" id="IPR011051">
    <property type="entry name" value="RmlC_Cupin_sf"/>
</dbReference>
<dbReference type="InterPro" id="IPR047233">
    <property type="entry name" value="UAH_cupin"/>
</dbReference>
<dbReference type="InterPro" id="IPR007247">
    <property type="entry name" value="Ureidogly_lyase"/>
</dbReference>
<dbReference type="InterPro" id="IPR023525">
    <property type="entry name" value="Ureidogly_lyase_bac"/>
</dbReference>
<dbReference type="InterPro" id="IPR024060">
    <property type="entry name" value="Ureidoglycolate_lyase_dom_sf"/>
</dbReference>
<dbReference type="NCBIfam" id="NF002953">
    <property type="entry name" value="PRK03606.2-4"/>
    <property type="match status" value="1"/>
</dbReference>
<dbReference type="NCBIfam" id="NF009932">
    <property type="entry name" value="PRK13395.1"/>
    <property type="match status" value="1"/>
</dbReference>
<dbReference type="PANTHER" id="PTHR21221">
    <property type="entry name" value="UREIDOGLYCOLATE HYDROLASE"/>
    <property type="match status" value="1"/>
</dbReference>
<dbReference type="PANTHER" id="PTHR21221:SF1">
    <property type="entry name" value="UREIDOGLYCOLATE LYASE"/>
    <property type="match status" value="1"/>
</dbReference>
<dbReference type="Pfam" id="PF04115">
    <property type="entry name" value="Ureidogly_lyase"/>
    <property type="match status" value="1"/>
</dbReference>
<dbReference type="PIRSF" id="PIRSF017306">
    <property type="entry name" value="Ureidogly_hydro"/>
    <property type="match status" value="1"/>
</dbReference>
<dbReference type="SUPFAM" id="SSF51182">
    <property type="entry name" value="RmlC-like cupins"/>
    <property type="match status" value="1"/>
</dbReference>
<sequence length="169" mass="19011">MQIETLTVEPLTKEAFAPFGDVIEVEGAQLRLINNGTTERYHDLARVEAAGTQTRVLINIFRGQSFAAPIDIMMMERHPFGSQAFIPLNGRPFLVVVAEDAGAGPARPRAFLARGDQGVNYLRNIWHHPLLALEQKSDFLVVDRAGREDNLEEYFFSDYAYRIETTQTA</sequence>
<accession>B0CKJ0</accession>
<reference key="1">
    <citation type="submission" date="2007-12" db="EMBL/GenBank/DDBJ databases">
        <title>Brucella suis ATCC 23445 whole genome shotgun sequencing project.</title>
        <authorList>
            <person name="Setubal J.C."/>
            <person name="Bowns C."/>
            <person name="Boyle S."/>
            <person name="Crasta O.R."/>
            <person name="Czar M.J."/>
            <person name="Dharmanolla C."/>
            <person name="Gillespie J.J."/>
            <person name="Kenyon R.W."/>
            <person name="Lu J."/>
            <person name="Mane S."/>
            <person name="Mohapatra S."/>
            <person name="Nagrani S."/>
            <person name="Purkayastha A."/>
            <person name="Rajasimha H.K."/>
            <person name="Shallom J.M."/>
            <person name="Shallom S."/>
            <person name="Shukla M."/>
            <person name="Snyder E.E."/>
            <person name="Sobral B.W."/>
            <person name="Wattam A.R."/>
            <person name="Will R."/>
            <person name="Williams K."/>
            <person name="Yoo H."/>
            <person name="Bruce D."/>
            <person name="Detter C."/>
            <person name="Munk C."/>
            <person name="Brettin T.S."/>
        </authorList>
    </citation>
    <scope>NUCLEOTIDE SEQUENCE [LARGE SCALE GENOMIC DNA]</scope>
    <source>
        <strain>ATCC 23445 / NCTC 10510</strain>
    </source>
</reference>
<gene>
    <name evidence="1" type="primary">allA</name>
    <name type="ordered locus">BSUIS_A0535</name>
</gene>
<protein>
    <recommendedName>
        <fullName evidence="1">Ureidoglycolate lyase</fullName>
        <ecNumber evidence="1">4.3.2.3</ecNumber>
    </recommendedName>
    <alternativeName>
        <fullName evidence="1">Ureidoglycolatase</fullName>
    </alternativeName>
</protein>
<feature type="chain" id="PRO_1000082578" description="Ureidoglycolate lyase">
    <location>
        <begin position="1"/>
        <end position="169"/>
    </location>
</feature>
<keyword id="KW-0456">Lyase</keyword>
<keyword id="KW-0659">Purine metabolism</keyword>
<evidence type="ECO:0000255" key="1">
    <source>
        <dbReference type="HAMAP-Rule" id="MF_00616"/>
    </source>
</evidence>
<comment type="function">
    <text evidence="1">Catalyzes the catabolism of the allantoin degradation intermediate (S)-ureidoglycolate, generating urea and glyoxylate. Involved in the utilization of allantoin as nitrogen source.</text>
</comment>
<comment type="catalytic activity">
    <reaction evidence="1">
        <text>(S)-ureidoglycolate = urea + glyoxylate</text>
        <dbReference type="Rhea" id="RHEA:11304"/>
        <dbReference type="ChEBI" id="CHEBI:16199"/>
        <dbReference type="ChEBI" id="CHEBI:36655"/>
        <dbReference type="ChEBI" id="CHEBI:57296"/>
        <dbReference type="EC" id="4.3.2.3"/>
    </reaction>
</comment>
<comment type="cofactor">
    <cofactor evidence="1">
        <name>Ni(2+)</name>
        <dbReference type="ChEBI" id="CHEBI:49786"/>
    </cofactor>
</comment>
<comment type="pathway">
    <text evidence="1">Nitrogen metabolism; (S)-allantoin degradation.</text>
</comment>
<comment type="subunit">
    <text evidence="1">Homodimer.</text>
</comment>
<comment type="similarity">
    <text evidence="1">Belongs to the ureidoglycolate lyase family.</text>
</comment>
<name>ALLA_BRUSI</name>